<protein>
    <recommendedName>
        <fullName evidence="1">Glutathione-regulated potassium-efflux system protein KefB</fullName>
    </recommendedName>
    <alternativeName>
        <fullName evidence="1">K(+)/H(+) antiporter</fullName>
    </alternativeName>
</protein>
<organism>
    <name type="scientific">Escherichia coli (strain K12 / MC4100 / BW2952)</name>
    <dbReference type="NCBI Taxonomy" id="595496"/>
    <lineage>
        <taxon>Bacteria</taxon>
        <taxon>Pseudomonadati</taxon>
        <taxon>Pseudomonadota</taxon>
        <taxon>Gammaproteobacteria</taxon>
        <taxon>Enterobacterales</taxon>
        <taxon>Enterobacteriaceae</taxon>
        <taxon>Escherichia</taxon>
    </lineage>
</organism>
<name>KEFB_ECOBW</name>
<gene>
    <name evidence="1" type="primary">kefB</name>
    <name type="ordered locus">BWG_3042</name>
</gene>
<accession>C4ZUK6</accession>
<sequence>MEGSDFLLAGVLFLFAAVAAVPLASRLGIGAVLGYLLAGIAIGPWGLGFISDVDEILHFSELGVVFLMFIIGLELNPSKLWQLRRSIFGVGAAQVLLSAALLAGLLMLTDFAWQAAVVGGIGLAMSSTAMALQLMREKGMNRSESGQLGFSVLLFQDLAVIPALALVPLLAGSADEHFDWMKVGMKVLAFVGMLIGGRYLLRPVFRFIAASGVREVFTAATLLLVLGSALFMDALGLSMALGTFIAGVLLAESEYRHELETAIDPFKGLLLGLFFISVGMSLNLGVLYTHLLWVVISVVVLVAVKILVLYLLARLYGVRSSERMQFAGVLSQGGEFAFVLFSTASSQRLFQGDQMALLLVTVTLSMMTTPLLMKLVDKWLSRQFNGPEEEDEKPWVNDDKPQVIVVGFGRFGQVIGRLLMANKMRITVLERDISAVNLMRKYGYKVYYGDATQVDLLRSAGAEAAESIVITCNEPEDTMKLVEICQQHFPHLHILARARGRVEAHELLQAGVTQFSRETFSSALELGRKTLVTLGMHPHQAQRAQLHFRRLDMRMLRELIPMHADTVQISRAREARRELEEIFQREMQQERRQLDGWDEFE</sequence>
<dbReference type="EMBL" id="CP001396">
    <property type="protein sequence ID" value="ACR64086.1"/>
    <property type="molecule type" value="Genomic_DNA"/>
</dbReference>
<dbReference type="RefSeq" id="WP_000399147.1">
    <property type="nucleotide sequence ID" value="NC_012759.1"/>
</dbReference>
<dbReference type="SMR" id="C4ZUK6"/>
<dbReference type="KEGG" id="ebw:BWG_3042"/>
<dbReference type="HOGENOM" id="CLU_005126_9_3_6"/>
<dbReference type="GO" id="GO:0005886">
    <property type="term" value="C:plasma membrane"/>
    <property type="evidence" value="ECO:0007669"/>
    <property type="project" value="UniProtKB-SubCell"/>
</dbReference>
<dbReference type="GO" id="GO:0015503">
    <property type="term" value="F:glutathione-regulated potassium exporter activity"/>
    <property type="evidence" value="ECO:0007669"/>
    <property type="project" value="UniProtKB-UniRule"/>
</dbReference>
<dbReference type="GO" id="GO:1902600">
    <property type="term" value="P:proton transmembrane transport"/>
    <property type="evidence" value="ECO:0007669"/>
    <property type="project" value="InterPro"/>
</dbReference>
<dbReference type="FunFam" id="1.20.1530.20:FF:000001">
    <property type="entry name" value="Glutathione-regulated potassium-efflux system protein KefB"/>
    <property type="match status" value="1"/>
</dbReference>
<dbReference type="FunFam" id="3.40.50.720:FF:000036">
    <property type="entry name" value="Glutathione-regulated potassium-efflux system protein KefB"/>
    <property type="match status" value="1"/>
</dbReference>
<dbReference type="Gene3D" id="1.20.1530.20">
    <property type="match status" value="1"/>
</dbReference>
<dbReference type="Gene3D" id="3.40.50.720">
    <property type="entry name" value="NAD(P)-binding Rossmann-like Domain"/>
    <property type="match status" value="1"/>
</dbReference>
<dbReference type="HAMAP" id="MF_01412">
    <property type="entry name" value="K_H_efflux_KefB"/>
    <property type="match status" value="1"/>
</dbReference>
<dbReference type="InterPro" id="IPR006153">
    <property type="entry name" value="Cation/H_exchanger_TM"/>
</dbReference>
<dbReference type="InterPro" id="IPR004771">
    <property type="entry name" value="K/H_exchanger"/>
</dbReference>
<dbReference type="InterPro" id="IPR020884">
    <property type="entry name" value="K_H_efflux_KefB"/>
</dbReference>
<dbReference type="InterPro" id="IPR038770">
    <property type="entry name" value="Na+/solute_symporter_sf"/>
</dbReference>
<dbReference type="InterPro" id="IPR036291">
    <property type="entry name" value="NAD(P)-bd_dom_sf"/>
</dbReference>
<dbReference type="InterPro" id="IPR003148">
    <property type="entry name" value="RCK_N"/>
</dbReference>
<dbReference type="NCBIfam" id="TIGR00932">
    <property type="entry name" value="2a37"/>
    <property type="match status" value="1"/>
</dbReference>
<dbReference type="NCBIfam" id="NF002973">
    <property type="entry name" value="PRK03659.1"/>
    <property type="match status" value="1"/>
</dbReference>
<dbReference type="PANTHER" id="PTHR46157">
    <property type="entry name" value="K(+) EFFLUX ANTIPORTER 3, CHLOROPLASTIC"/>
    <property type="match status" value="1"/>
</dbReference>
<dbReference type="PANTHER" id="PTHR46157:SF4">
    <property type="entry name" value="K(+) EFFLUX ANTIPORTER 3, CHLOROPLASTIC"/>
    <property type="match status" value="1"/>
</dbReference>
<dbReference type="Pfam" id="PF00999">
    <property type="entry name" value="Na_H_Exchanger"/>
    <property type="match status" value="1"/>
</dbReference>
<dbReference type="Pfam" id="PF02254">
    <property type="entry name" value="TrkA_N"/>
    <property type="match status" value="1"/>
</dbReference>
<dbReference type="SUPFAM" id="SSF51735">
    <property type="entry name" value="NAD(P)-binding Rossmann-fold domains"/>
    <property type="match status" value="1"/>
</dbReference>
<dbReference type="PROSITE" id="PS51201">
    <property type="entry name" value="RCK_N"/>
    <property type="match status" value="1"/>
</dbReference>
<comment type="function">
    <text evidence="1">Pore-forming subunit of a potassium efflux system that confers protection against electrophiles. Catalyzes K(+)/H(+) antiport.</text>
</comment>
<comment type="subunit">
    <text evidence="1">Interacts with the regulatory subunit KefG.</text>
</comment>
<comment type="subcellular location">
    <subcellularLocation>
        <location evidence="1">Cell inner membrane</location>
        <topology evidence="1">Multi-pass membrane protein</topology>
    </subcellularLocation>
</comment>
<comment type="similarity">
    <text evidence="1">Belongs to the monovalent cation:proton antiporter 2 (CPA2) transporter (TC 2.A.37) family. KefB subfamily.</text>
</comment>
<feature type="chain" id="PRO_1000215222" description="Glutathione-regulated potassium-efflux system protein KefB">
    <location>
        <begin position="1"/>
        <end position="601"/>
    </location>
</feature>
<feature type="transmembrane region" description="Helical" evidence="1">
    <location>
        <begin position="4"/>
        <end position="24"/>
    </location>
</feature>
<feature type="transmembrane region" description="Helical" evidence="1">
    <location>
        <begin position="29"/>
        <end position="49"/>
    </location>
</feature>
<feature type="transmembrane region" description="Helical" evidence="1">
    <location>
        <begin position="55"/>
        <end position="75"/>
    </location>
</feature>
<feature type="transmembrane region" description="Helical" evidence="1">
    <location>
        <begin position="87"/>
        <end position="107"/>
    </location>
</feature>
<feature type="transmembrane region" description="Helical" evidence="1">
    <location>
        <begin position="115"/>
        <end position="135"/>
    </location>
</feature>
<feature type="transmembrane region" description="Helical" evidence="1">
    <location>
        <begin position="152"/>
        <end position="172"/>
    </location>
</feature>
<feature type="transmembrane region" description="Helical" evidence="1">
    <location>
        <begin position="177"/>
        <end position="197"/>
    </location>
</feature>
<feature type="transmembrane region" description="Helical" evidence="1">
    <location>
        <begin position="207"/>
        <end position="227"/>
    </location>
</feature>
<feature type="transmembrane region" description="Helical" evidence="1">
    <location>
        <begin position="230"/>
        <end position="250"/>
    </location>
</feature>
<feature type="transmembrane region" description="Helical" evidence="1">
    <location>
        <begin position="268"/>
        <end position="288"/>
    </location>
</feature>
<feature type="transmembrane region" description="Helical" evidence="1">
    <location>
        <begin position="291"/>
        <end position="311"/>
    </location>
</feature>
<feature type="transmembrane region" description="Helical" evidence="1">
    <location>
        <begin position="324"/>
        <end position="344"/>
    </location>
</feature>
<feature type="transmembrane region" description="Helical" evidence="1">
    <location>
        <begin position="356"/>
        <end position="376"/>
    </location>
</feature>
<feature type="domain" description="RCK N-terminal" evidence="2">
    <location>
        <begin position="400"/>
        <end position="519"/>
    </location>
</feature>
<evidence type="ECO:0000255" key="1">
    <source>
        <dbReference type="HAMAP-Rule" id="MF_01412"/>
    </source>
</evidence>
<evidence type="ECO:0000255" key="2">
    <source>
        <dbReference type="PROSITE-ProRule" id="PRU00543"/>
    </source>
</evidence>
<keyword id="KW-0050">Antiport</keyword>
<keyword id="KW-0997">Cell inner membrane</keyword>
<keyword id="KW-1003">Cell membrane</keyword>
<keyword id="KW-0406">Ion transport</keyword>
<keyword id="KW-0472">Membrane</keyword>
<keyword id="KW-0630">Potassium</keyword>
<keyword id="KW-0633">Potassium transport</keyword>
<keyword id="KW-0812">Transmembrane</keyword>
<keyword id="KW-1133">Transmembrane helix</keyword>
<keyword id="KW-0813">Transport</keyword>
<proteinExistence type="inferred from homology"/>
<reference key="1">
    <citation type="journal article" date="2009" name="J. Bacteriol.">
        <title>Genomic sequencing reveals regulatory mutations and recombinational events in the widely used MC4100 lineage of Escherichia coli K-12.</title>
        <authorList>
            <person name="Ferenci T."/>
            <person name="Zhou Z."/>
            <person name="Betteridge T."/>
            <person name="Ren Y."/>
            <person name="Liu Y."/>
            <person name="Feng L."/>
            <person name="Reeves P.R."/>
            <person name="Wang L."/>
        </authorList>
    </citation>
    <scope>NUCLEOTIDE SEQUENCE [LARGE SCALE GENOMIC DNA]</scope>
    <source>
        <strain>K12 / MC4100 / BW2952</strain>
    </source>
</reference>